<dbReference type="EMBL" id="CU329671">
    <property type="protein sequence ID" value="CAA17788.1"/>
    <property type="molecule type" value="Genomic_DNA"/>
</dbReference>
<dbReference type="PIR" id="T40347">
    <property type="entry name" value="T40347"/>
</dbReference>
<dbReference type="RefSeq" id="NP_596666.1">
    <property type="nucleotide sequence ID" value="NM_001022588.2"/>
</dbReference>
<dbReference type="SMR" id="O43037"/>
<dbReference type="BioGRID" id="277050">
    <property type="interactions" value="2"/>
</dbReference>
<dbReference type="FunCoup" id="O43037">
    <property type="interactions" value="733"/>
</dbReference>
<dbReference type="STRING" id="284812.O43037"/>
<dbReference type="PaxDb" id="4896-SPBC3B9.08c.1"/>
<dbReference type="EnsemblFungi" id="SPBC3B9.08c.1">
    <property type="protein sequence ID" value="SPBC3B9.08c.1:pep"/>
    <property type="gene ID" value="SPBC3B9.08c"/>
</dbReference>
<dbReference type="GeneID" id="2540522"/>
<dbReference type="KEGG" id="spo:2540522"/>
<dbReference type="PomBase" id="SPBC3B9.08c">
    <property type="gene designation" value="mnh1"/>
</dbReference>
<dbReference type="VEuPathDB" id="FungiDB:SPBC3B9.08c"/>
<dbReference type="eggNOG" id="KOG3392">
    <property type="taxonomic scope" value="Eukaryota"/>
</dbReference>
<dbReference type="HOGENOM" id="CLU_109497_1_1_1"/>
<dbReference type="InParanoid" id="O43037"/>
<dbReference type="OMA" id="IRKEMWI"/>
<dbReference type="PhylomeDB" id="O43037"/>
<dbReference type="Reactome" id="R-SPO-159236">
    <property type="pathway name" value="Transport of Mature mRNA derived from an Intron-Containing Transcript"/>
</dbReference>
<dbReference type="Reactome" id="R-SPO-72163">
    <property type="pathway name" value="mRNA Splicing - Major Pathway"/>
</dbReference>
<dbReference type="Reactome" id="R-SPO-975957">
    <property type="pathway name" value="Nonsense Mediated Decay (NMD) enhanced by the Exon Junction Complex (EJC)"/>
</dbReference>
<dbReference type="PRO" id="PR:O43037"/>
<dbReference type="Proteomes" id="UP000002485">
    <property type="component" value="Chromosome II"/>
</dbReference>
<dbReference type="GO" id="GO:0005829">
    <property type="term" value="C:cytosol"/>
    <property type="evidence" value="ECO:0007005"/>
    <property type="project" value="PomBase"/>
</dbReference>
<dbReference type="GO" id="GO:0035145">
    <property type="term" value="C:exon-exon junction complex"/>
    <property type="evidence" value="ECO:0000269"/>
    <property type="project" value="PomBase"/>
</dbReference>
<dbReference type="GO" id="GO:0005634">
    <property type="term" value="C:nucleus"/>
    <property type="evidence" value="ECO:0007005"/>
    <property type="project" value="PomBase"/>
</dbReference>
<dbReference type="GO" id="GO:0045292">
    <property type="term" value="P:mRNA cis splicing, via spliceosome"/>
    <property type="evidence" value="ECO:0000315"/>
    <property type="project" value="PomBase"/>
</dbReference>
<dbReference type="GO" id="GO:0071030">
    <property type="term" value="P:nuclear mRNA surveillance of spliceosomal pre-mRNA splicing"/>
    <property type="evidence" value="ECO:0000269"/>
    <property type="project" value="PomBase"/>
</dbReference>
<dbReference type="GO" id="GO:0008380">
    <property type="term" value="P:RNA splicing"/>
    <property type="evidence" value="ECO:0000318"/>
    <property type="project" value="GO_Central"/>
</dbReference>
<dbReference type="CDD" id="cd11295">
    <property type="entry name" value="Mago_nashi"/>
    <property type="match status" value="1"/>
</dbReference>
<dbReference type="FunFam" id="3.30.1560.10:FF:000001">
    <property type="entry name" value="Protein mago nashi homolog"/>
    <property type="match status" value="1"/>
</dbReference>
<dbReference type="Gene3D" id="3.30.1560.10">
    <property type="entry name" value="Mago nashi"/>
    <property type="match status" value="1"/>
</dbReference>
<dbReference type="InterPro" id="IPR004023">
    <property type="entry name" value="Mago_nashi"/>
</dbReference>
<dbReference type="InterPro" id="IPR036605">
    <property type="entry name" value="Mago_nashi_sf"/>
</dbReference>
<dbReference type="PANTHER" id="PTHR12638:SF0">
    <property type="entry name" value="MAGO HOMOLOG, EXON JUNCTION COMPLEX SUBUNIT-RELATED"/>
    <property type="match status" value="1"/>
</dbReference>
<dbReference type="PANTHER" id="PTHR12638">
    <property type="entry name" value="PROTEIN MAGO NASHI HOMOLOG"/>
    <property type="match status" value="1"/>
</dbReference>
<dbReference type="Pfam" id="PF02792">
    <property type="entry name" value="Mago_nashi"/>
    <property type="match status" value="1"/>
</dbReference>
<dbReference type="SUPFAM" id="SSF89817">
    <property type="entry name" value="Mago nashi protein"/>
    <property type="match status" value="1"/>
</dbReference>
<keyword id="KW-0963">Cytoplasm</keyword>
<keyword id="KW-0539">Nucleus</keyword>
<keyword id="KW-1185">Reference proteome</keyword>
<evidence type="ECO:0000269" key="1">
    <source>
    </source>
</evidence>
<evidence type="ECO:0000305" key="2"/>
<feature type="chain" id="PRO_0000174155" description="Protein mago nashi homolog">
    <location>
        <begin position="1"/>
        <end position="147"/>
    </location>
</feature>
<gene>
    <name type="primary">mnh1</name>
    <name type="ORF">SPBC3B9.08c</name>
</gene>
<protein>
    <recommendedName>
        <fullName>Protein mago nashi homolog</fullName>
    </recommendedName>
</protein>
<organism>
    <name type="scientific">Schizosaccharomyces pombe (strain 972 / ATCC 24843)</name>
    <name type="common">Fission yeast</name>
    <dbReference type="NCBI Taxonomy" id="284812"/>
    <lineage>
        <taxon>Eukaryota</taxon>
        <taxon>Fungi</taxon>
        <taxon>Dikarya</taxon>
        <taxon>Ascomycota</taxon>
        <taxon>Taphrinomycotina</taxon>
        <taxon>Schizosaccharomycetes</taxon>
        <taxon>Schizosaccharomycetales</taxon>
        <taxon>Schizosaccharomycetaceae</taxon>
        <taxon>Schizosaccharomyces</taxon>
    </lineage>
</organism>
<comment type="subcellular location">
    <subcellularLocation>
        <location evidence="1">Cytoplasm</location>
    </subcellularLocation>
    <subcellularLocation>
        <location evidence="1">Nucleus</location>
    </subcellularLocation>
</comment>
<comment type="similarity">
    <text evidence="2">Belongs to the mago nashi family.</text>
</comment>
<name>MGN_SCHPO</name>
<reference key="1">
    <citation type="journal article" date="2002" name="Nature">
        <title>The genome sequence of Schizosaccharomyces pombe.</title>
        <authorList>
            <person name="Wood V."/>
            <person name="Gwilliam R."/>
            <person name="Rajandream M.A."/>
            <person name="Lyne M.H."/>
            <person name="Lyne R."/>
            <person name="Stewart A."/>
            <person name="Sgouros J.G."/>
            <person name="Peat N."/>
            <person name="Hayles J."/>
            <person name="Baker S.G."/>
            <person name="Basham D."/>
            <person name="Bowman S."/>
            <person name="Brooks K."/>
            <person name="Brown D."/>
            <person name="Brown S."/>
            <person name="Chillingworth T."/>
            <person name="Churcher C.M."/>
            <person name="Collins M."/>
            <person name="Connor R."/>
            <person name="Cronin A."/>
            <person name="Davis P."/>
            <person name="Feltwell T."/>
            <person name="Fraser A."/>
            <person name="Gentles S."/>
            <person name="Goble A."/>
            <person name="Hamlin N."/>
            <person name="Harris D.E."/>
            <person name="Hidalgo J."/>
            <person name="Hodgson G."/>
            <person name="Holroyd S."/>
            <person name="Hornsby T."/>
            <person name="Howarth S."/>
            <person name="Huckle E.J."/>
            <person name="Hunt S."/>
            <person name="Jagels K."/>
            <person name="James K.D."/>
            <person name="Jones L."/>
            <person name="Jones M."/>
            <person name="Leather S."/>
            <person name="McDonald S."/>
            <person name="McLean J."/>
            <person name="Mooney P."/>
            <person name="Moule S."/>
            <person name="Mungall K.L."/>
            <person name="Murphy L.D."/>
            <person name="Niblett D."/>
            <person name="Odell C."/>
            <person name="Oliver K."/>
            <person name="O'Neil S."/>
            <person name="Pearson D."/>
            <person name="Quail M.A."/>
            <person name="Rabbinowitsch E."/>
            <person name="Rutherford K.M."/>
            <person name="Rutter S."/>
            <person name="Saunders D."/>
            <person name="Seeger K."/>
            <person name="Sharp S."/>
            <person name="Skelton J."/>
            <person name="Simmonds M.N."/>
            <person name="Squares R."/>
            <person name="Squares S."/>
            <person name="Stevens K."/>
            <person name="Taylor K."/>
            <person name="Taylor R.G."/>
            <person name="Tivey A."/>
            <person name="Walsh S.V."/>
            <person name="Warren T."/>
            <person name="Whitehead S."/>
            <person name="Woodward J.R."/>
            <person name="Volckaert G."/>
            <person name="Aert R."/>
            <person name="Robben J."/>
            <person name="Grymonprez B."/>
            <person name="Weltjens I."/>
            <person name="Vanstreels E."/>
            <person name="Rieger M."/>
            <person name="Schaefer M."/>
            <person name="Mueller-Auer S."/>
            <person name="Gabel C."/>
            <person name="Fuchs M."/>
            <person name="Duesterhoeft A."/>
            <person name="Fritzc C."/>
            <person name="Holzer E."/>
            <person name="Moestl D."/>
            <person name="Hilbert H."/>
            <person name="Borzym K."/>
            <person name="Langer I."/>
            <person name="Beck A."/>
            <person name="Lehrach H."/>
            <person name="Reinhardt R."/>
            <person name="Pohl T.M."/>
            <person name="Eger P."/>
            <person name="Zimmermann W."/>
            <person name="Wedler H."/>
            <person name="Wambutt R."/>
            <person name="Purnelle B."/>
            <person name="Goffeau A."/>
            <person name="Cadieu E."/>
            <person name="Dreano S."/>
            <person name="Gloux S."/>
            <person name="Lelaure V."/>
            <person name="Mottier S."/>
            <person name="Galibert F."/>
            <person name="Aves S.J."/>
            <person name="Xiang Z."/>
            <person name="Hunt C."/>
            <person name="Moore K."/>
            <person name="Hurst S.M."/>
            <person name="Lucas M."/>
            <person name="Rochet M."/>
            <person name="Gaillardin C."/>
            <person name="Tallada V.A."/>
            <person name="Garzon A."/>
            <person name="Thode G."/>
            <person name="Daga R.R."/>
            <person name="Cruzado L."/>
            <person name="Jimenez J."/>
            <person name="Sanchez M."/>
            <person name="del Rey F."/>
            <person name="Benito J."/>
            <person name="Dominguez A."/>
            <person name="Revuelta J.L."/>
            <person name="Moreno S."/>
            <person name="Armstrong J."/>
            <person name="Forsburg S.L."/>
            <person name="Cerutti L."/>
            <person name="Lowe T."/>
            <person name="McCombie W.R."/>
            <person name="Paulsen I."/>
            <person name="Potashkin J."/>
            <person name="Shpakovski G.V."/>
            <person name="Ussery D."/>
            <person name="Barrell B.G."/>
            <person name="Nurse P."/>
        </authorList>
    </citation>
    <scope>NUCLEOTIDE SEQUENCE [LARGE SCALE GENOMIC DNA]</scope>
    <source>
        <strain>972 / ATCC 24843</strain>
    </source>
</reference>
<reference key="2">
    <citation type="journal article" date="2006" name="Nat. Biotechnol.">
        <title>ORFeome cloning and global analysis of protein localization in the fission yeast Schizosaccharomyces pombe.</title>
        <authorList>
            <person name="Matsuyama A."/>
            <person name="Arai R."/>
            <person name="Yashiroda Y."/>
            <person name="Shirai A."/>
            <person name="Kamata A."/>
            <person name="Sekido S."/>
            <person name="Kobayashi Y."/>
            <person name="Hashimoto A."/>
            <person name="Hamamoto M."/>
            <person name="Hiraoka Y."/>
            <person name="Horinouchi S."/>
            <person name="Yoshida M."/>
        </authorList>
    </citation>
    <scope>SUBCELLULAR LOCATION [LARGE SCALE ANALYSIS]</scope>
</reference>
<proteinExistence type="inferred from homology"/>
<accession>O43037</accession>
<sequence>MSDFYVRYYSGHHGRFGHEFLEFDYHSDGLARYANNSNYRNDSLIRKEMFVSELVLKEVQRIVDDSEIIKESDESWPPENKDGKQELEIRMNGKHIMFETCKLGSLADVQNSDDPEGLKVFYYLIQDLKALCFSLISLNFKLRPVKN</sequence>